<protein>
    <recommendedName>
        <fullName evidence="1">Bifunctional protein PyrR</fullName>
    </recommendedName>
    <domain>
        <recommendedName>
            <fullName evidence="1">Pyrimidine operon regulatory protein</fullName>
        </recommendedName>
    </domain>
    <domain>
        <recommendedName>
            <fullName evidence="1">Uracil phosphoribosyltransferase</fullName>
            <shortName evidence="1">UPRTase</shortName>
            <ecNumber evidence="1">2.4.2.9</ecNumber>
        </recommendedName>
    </domain>
</protein>
<name>PYRR_BREBN</name>
<reference key="1">
    <citation type="submission" date="2005-03" db="EMBL/GenBank/DDBJ databases">
        <title>Brevibacillus brevis strain 47, complete genome.</title>
        <authorList>
            <person name="Hosoyama A."/>
            <person name="Yamada R."/>
            <person name="Hongo Y."/>
            <person name="Terui Y."/>
            <person name="Ankai A."/>
            <person name="Masuyama W."/>
            <person name="Sekiguchi M."/>
            <person name="Takeda T."/>
            <person name="Asano K."/>
            <person name="Ohji S."/>
            <person name="Ichikawa N."/>
            <person name="Narita S."/>
            <person name="Aoki N."/>
            <person name="Miura H."/>
            <person name="Matsushita S."/>
            <person name="Sekigawa T."/>
            <person name="Yamagata H."/>
            <person name="Yoshikawa H."/>
            <person name="Udaka S."/>
            <person name="Tanikawa S."/>
            <person name="Fujita N."/>
        </authorList>
    </citation>
    <scope>NUCLEOTIDE SEQUENCE [LARGE SCALE GENOMIC DNA]</scope>
    <source>
        <strain>47 / JCM 6285 / NBRC 100599</strain>
    </source>
</reference>
<gene>
    <name evidence="1" type="primary">pyrR</name>
    <name type="ordered locus">BBR47_37770</name>
</gene>
<evidence type="ECO:0000255" key="1">
    <source>
        <dbReference type="HAMAP-Rule" id="MF_01219"/>
    </source>
</evidence>
<feature type="chain" id="PRO_1000164845" description="Bifunctional protein PyrR">
    <location>
        <begin position="1"/>
        <end position="179"/>
    </location>
</feature>
<feature type="short sequence motif" description="PRPP-binding" evidence="1">
    <location>
        <begin position="99"/>
        <end position="111"/>
    </location>
</feature>
<organism>
    <name type="scientific">Brevibacillus brevis (strain 47 / JCM 6285 / NBRC 100599)</name>
    <dbReference type="NCBI Taxonomy" id="358681"/>
    <lineage>
        <taxon>Bacteria</taxon>
        <taxon>Bacillati</taxon>
        <taxon>Bacillota</taxon>
        <taxon>Bacilli</taxon>
        <taxon>Bacillales</taxon>
        <taxon>Paenibacillaceae</taxon>
        <taxon>Brevibacillus</taxon>
    </lineage>
</organism>
<dbReference type="EC" id="2.4.2.9" evidence="1"/>
<dbReference type="EMBL" id="AP008955">
    <property type="protein sequence ID" value="BAH44754.1"/>
    <property type="molecule type" value="Genomic_DNA"/>
</dbReference>
<dbReference type="RefSeq" id="WP_007728461.1">
    <property type="nucleotide sequence ID" value="NC_012491.1"/>
</dbReference>
<dbReference type="SMR" id="C0ZG45"/>
<dbReference type="STRING" id="358681.BBR47_37770"/>
<dbReference type="GeneID" id="95749573"/>
<dbReference type="KEGG" id="bbe:BBR47_37770"/>
<dbReference type="eggNOG" id="COG2065">
    <property type="taxonomic scope" value="Bacteria"/>
</dbReference>
<dbReference type="HOGENOM" id="CLU_094234_2_1_9"/>
<dbReference type="Proteomes" id="UP000001877">
    <property type="component" value="Chromosome"/>
</dbReference>
<dbReference type="GO" id="GO:0003723">
    <property type="term" value="F:RNA binding"/>
    <property type="evidence" value="ECO:0007669"/>
    <property type="project" value="UniProtKB-UniRule"/>
</dbReference>
<dbReference type="GO" id="GO:0004845">
    <property type="term" value="F:uracil phosphoribosyltransferase activity"/>
    <property type="evidence" value="ECO:0007669"/>
    <property type="project" value="UniProtKB-UniRule"/>
</dbReference>
<dbReference type="GO" id="GO:0006353">
    <property type="term" value="P:DNA-templated transcription termination"/>
    <property type="evidence" value="ECO:0007669"/>
    <property type="project" value="UniProtKB-UniRule"/>
</dbReference>
<dbReference type="CDD" id="cd06223">
    <property type="entry name" value="PRTases_typeI"/>
    <property type="match status" value="1"/>
</dbReference>
<dbReference type="FunFam" id="3.40.50.2020:FF:000020">
    <property type="entry name" value="Bifunctional protein PyrR"/>
    <property type="match status" value="1"/>
</dbReference>
<dbReference type="Gene3D" id="3.40.50.2020">
    <property type="match status" value="1"/>
</dbReference>
<dbReference type="HAMAP" id="MF_01219">
    <property type="entry name" value="PyrR"/>
    <property type="match status" value="1"/>
</dbReference>
<dbReference type="InterPro" id="IPR000836">
    <property type="entry name" value="PRibTrfase_dom"/>
</dbReference>
<dbReference type="InterPro" id="IPR029057">
    <property type="entry name" value="PRTase-like"/>
</dbReference>
<dbReference type="InterPro" id="IPR023050">
    <property type="entry name" value="PyrR"/>
</dbReference>
<dbReference type="InterPro" id="IPR050137">
    <property type="entry name" value="PyrR_bifunctional"/>
</dbReference>
<dbReference type="NCBIfam" id="NF003545">
    <property type="entry name" value="PRK05205.1-1"/>
    <property type="match status" value="1"/>
</dbReference>
<dbReference type="NCBIfam" id="NF003547">
    <property type="entry name" value="PRK05205.1-3"/>
    <property type="match status" value="1"/>
</dbReference>
<dbReference type="NCBIfam" id="NF003548">
    <property type="entry name" value="PRK05205.1-4"/>
    <property type="match status" value="1"/>
</dbReference>
<dbReference type="NCBIfam" id="NF003549">
    <property type="entry name" value="PRK05205.1-5"/>
    <property type="match status" value="1"/>
</dbReference>
<dbReference type="PANTHER" id="PTHR11608">
    <property type="entry name" value="BIFUNCTIONAL PROTEIN PYRR"/>
    <property type="match status" value="1"/>
</dbReference>
<dbReference type="PANTHER" id="PTHR11608:SF0">
    <property type="entry name" value="BIFUNCTIONAL PROTEIN PYRR"/>
    <property type="match status" value="1"/>
</dbReference>
<dbReference type="Pfam" id="PF00156">
    <property type="entry name" value="Pribosyltran"/>
    <property type="match status" value="1"/>
</dbReference>
<dbReference type="SUPFAM" id="SSF53271">
    <property type="entry name" value="PRTase-like"/>
    <property type="match status" value="1"/>
</dbReference>
<comment type="function">
    <text evidence="1">Regulates transcriptional attenuation of the pyrimidine nucleotide (pyr) operon by binding in a uridine-dependent manner to specific sites on pyr mRNA. This disrupts an antiterminator hairpin in the RNA and favors formation of a downstream transcription terminator, leading to a reduced expression of downstream genes.</text>
</comment>
<comment type="function">
    <text evidence="1">Also displays a weak uracil phosphoribosyltransferase activity which is not physiologically significant.</text>
</comment>
<comment type="catalytic activity">
    <reaction evidence="1">
        <text>UMP + diphosphate = 5-phospho-alpha-D-ribose 1-diphosphate + uracil</text>
        <dbReference type="Rhea" id="RHEA:13017"/>
        <dbReference type="ChEBI" id="CHEBI:17568"/>
        <dbReference type="ChEBI" id="CHEBI:33019"/>
        <dbReference type="ChEBI" id="CHEBI:57865"/>
        <dbReference type="ChEBI" id="CHEBI:58017"/>
        <dbReference type="EC" id="2.4.2.9"/>
    </reaction>
</comment>
<comment type="subunit">
    <text evidence="1">Homodimer and homohexamer; in equilibrium.</text>
</comment>
<comment type="similarity">
    <text evidence="1">Belongs to the purine/pyrimidine phosphoribosyltransferase family. PyrR subfamily.</text>
</comment>
<accession>C0ZG45</accession>
<proteinExistence type="inferred from homology"/>
<keyword id="KW-0328">Glycosyltransferase</keyword>
<keyword id="KW-1185">Reference proteome</keyword>
<keyword id="KW-0694">RNA-binding</keyword>
<keyword id="KW-0804">Transcription</keyword>
<keyword id="KW-0805">Transcription regulation</keyword>
<keyword id="KW-0806">Transcription termination</keyword>
<keyword id="KW-0808">Transferase</keyword>
<sequence>MINKSVIMDEAAIRRALTRIAHEIIERNKGVEDLIIVGIKTRGIYLAQRLVERIEMIENVKVPVGELDITFYRDDLQHKSEDAILQGSKLPDQITGKTVILVDDVLYTGRTVRAALDALIDNGRPRMIQLAVLVDRGHRELPIRPDFVGKNLPTARTEIVDVQLAEVDVMDIVSIRQLL</sequence>